<reference key="1">
    <citation type="journal article" date="2008" name="Genome Biol.">
        <title>The genome sequence of the model ascomycete fungus Podospora anserina.</title>
        <authorList>
            <person name="Espagne E."/>
            <person name="Lespinet O."/>
            <person name="Malagnac F."/>
            <person name="Da Silva C."/>
            <person name="Jaillon O."/>
            <person name="Porcel B.M."/>
            <person name="Couloux A."/>
            <person name="Aury J.-M."/>
            <person name="Segurens B."/>
            <person name="Poulain J."/>
            <person name="Anthouard V."/>
            <person name="Grossetete S."/>
            <person name="Khalili H."/>
            <person name="Coppin E."/>
            <person name="Dequard-Chablat M."/>
            <person name="Picard M."/>
            <person name="Contamine V."/>
            <person name="Arnaise S."/>
            <person name="Bourdais A."/>
            <person name="Berteaux-Lecellier V."/>
            <person name="Gautheret D."/>
            <person name="de Vries R.P."/>
            <person name="Battaglia E."/>
            <person name="Coutinho P.M."/>
            <person name="Danchin E.G.J."/>
            <person name="Henrissat B."/>
            <person name="El Khoury R."/>
            <person name="Sainsard-Chanet A."/>
            <person name="Boivin A."/>
            <person name="Pinan-Lucarre B."/>
            <person name="Sellem C.H."/>
            <person name="Debuchy R."/>
            <person name="Wincker P."/>
            <person name="Weissenbach J."/>
            <person name="Silar P."/>
        </authorList>
    </citation>
    <scope>NUCLEOTIDE SEQUENCE [LARGE SCALE GENOMIC DNA]</scope>
    <source>
        <strain>S / ATCC MYA-4624 / DSM 980 / FGSC 10383</strain>
    </source>
</reference>
<reference key="2">
    <citation type="journal article" date="2014" name="Genetics">
        <title>Maintaining two mating types: Structure of the mating type locus and its role in heterokaryosis in Podospora anserina.</title>
        <authorList>
            <person name="Grognet P."/>
            <person name="Bidard F."/>
            <person name="Kuchly C."/>
            <person name="Tong L.C.H."/>
            <person name="Coppin E."/>
            <person name="Benkhali J.A."/>
            <person name="Couloux A."/>
            <person name="Wincker P."/>
            <person name="Debuchy R."/>
            <person name="Silar P."/>
        </authorList>
    </citation>
    <scope>GENOME REANNOTATION</scope>
    <source>
        <strain>S / ATCC MYA-4624 / DSM 980 / FGSC 10383</strain>
    </source>
</reference>
<dbReference type="EC" id="2.8.1.8" evidence="1"/>
<dbReference type="EMBL" id="CU633899">
    <property type="protein sequence ID" value="CAP67566.1"/>
    <property type="molecule type" value="Genomic_DNA"/>
</dbReference>
<dbReference type="EMBL" id="FO904936">
    <property type="protein sequence ID" value="CDP23827.1"/>
    <property type="molecule type" value="Genomic_DNA"/>
</dbReference>
<dbReference type="RefSeq" id="XP_001906895.1">
    <property type="nucleotide sequence ID" value="XM_001906860.1"/>
</dbReference>
<dbReference type="SMR" id="B2AT43"/>
<dbReference type="FunCoup" id="B2AT43">
    <property type="interactions" value="581"/>
</dbReference>
<dbReference type="STRING" id="515849.B2AT43"/>
<dbReference type="GeneID" id="6191609"/>
<dbReference type="KEGG" id="pan:PODANSg3928"/>
<dbReference type="VEuPathDB" id="FungiDB:PODANS_1_14620"/>
<dbReference type="eggNOG" id="KOG2672">
    <property type="taxonomic scope" value="Eukaryota"/>
</dbReference>
<dbReference type="HOGENOM" id="CLU_033144_0_1_1"/>
<dbReference type="InParanoid" id="B2AT43"/>
<dbReference type="OrthoDB" id="3231at2759"/>
<dbReference type="UniPathway" id="UPA00538">
    <property type="reaction ID" value="UER00593"/>
</dbReference>
<dbReference type="Proteomes" id="UP000001197">
    <property type="component" value="Chromosome 1"/>
</dbReference>
<dbReference type="GO" id="GO:0005739">
    <property type="term" value="C:mitochondrion"/>
    <property type="evidence" value="ECO:0007669"/>
    <property type="project" value="UniProtKB-SubCell"/>
</dbReference>
<dbReference type="GO" id="GO:0051539">
    <property type="term" value="F:4 iron, 4 sulfur cluster binding"/>
    <property type="evidence" value="ECO:0007669"/>
    <property type="project" value="UniProtKB-UniRule"/>
</dbReference>
<dbReference type="GO" id="GO:0016992">
    <property type="term" value="F:lipoate synthase activity"/>
    <property type="evidence" value="ECO:0007669"/>
    <property type="project" value="UniProtKB-UniRule"/>
</dbReference>
<dbReference type="GO" id="GO:0046872">
    <property type="term" value="F:metal ion binding"/>
    <property type="evidence" value="ECO:0007669"/>
    <property type="project" value="UniProtKB-KW"/>
</dbReference>
<dbReference type="CDD" id="cd01335">
    <property type="entry name" value="Radical_SAM"/>
    <property type="match status" value="1"/>
</dbReference>
<dbReference type="FunFam" id="3.20.20.70:FF:000036">
    <property type="entry name" value="Lipoyl synthase, mitochondrial"/>
    <property type="match status" value="1"/>
</dbReference>
<dbReference type="Gene3D" id="3.20.20.70">
    <property type="entry name" value="Aldolase class I"/>
    <property type="match status" value="1"/>
</dbReference>
<dbReference type="HAMAP" id="MF_00206">
    <property type="entry name" value="Lipoyl_synth"/>
    <property type="match status" value="1"/>
</dbReference>
<dbReference type="InterPro" id="IPR013785">
    <property type="entry name" value="Aldolase_TIM"/>
</dbReference>
<dbReference type="InterPro" id="IPR006638">
    <property type="entry name" value="Elp3/MiaA/NifB-like_rSAM"/>
</dbReference>
<dbReference type="InterPro" id="IPR031691">
    <property type="entry name" value="LIAS_N"/>
</dbReference>
<dbReference type="InterPro" id="IPR003698">
    <property type="entry name" value="Lipoyl_synth"/>
</dbReference>
<dbReference type="InterPro" id="IPR007197">
    <property type="entry name" value="rSAM"/>
</dbReference>
<dbReference type="NCBIfam" id="TIGR00510">
    <property type="entry name" value="lipA"/>
    <property type="match status" value="1"/>
</dbReference>
<dbReference type="NCBIfam" id="NF004019">
    <property type="entry name" value="PRK05481.1"/>
    <property type="match status" value="1"/>
</dbReference>
<dbReference type="NCBIfam" id="NF009544">
    <property type="entry name" value="PRK12928.1"/>
    <property type="match status" value="1"/>
</dbReference>
<dbReference type="PANTHER" id="PTHR10949">
    <property type="entry name" value="LIPOYL SYNTHASE"/>
    <property type="match status" value="1"/>
</dbReference>
<dbReference type="PANTHER" id="PTHR10949:SF0">
    <property type="entry name" value="LIPOYL SYNTHASE, MITOCHONDRIAL"/>
    <property type="match status" value="1"/>
</dbReference>
<dbReference type="Pfam" id="PF16881">
    <property type="entry name" value="LIAS_N"/>
    <property type="match status" value="1"/>
</dbReference>
<dbReference type="Pfam" id="PF04055">
    <property type="entry name" value="Radical_SAM"/>
    <property type="match status" value="1"/>
</dbReference>
<dbReference type="SFLD" id="SFLDF00271">
    <property type="entry name" value="lipoyl_synthase"/>
    <property type="match status" value="1"/>
</dbReference>
<dbReference type="SFLD" id="SFLDG01058">
    <property type="entry name" value="lipoyl_synthase_like"/>
    <property type="match status" value="1"/>
</dbReference>
<dbReference type="SMART" id="SM00729">
    <property type="entry name" value="Elp3"/>
    <property type="match status" value="1"/>
</dbReference>
<dbReference type="SUPFAM" id="SSF102114">
    <property type="entry name" value="Radical SAM enzymes"/>
    <property type="match status" value="1"/>
</dbReference>
<dbReference type="PROSITE" id="PS51918">
    <property type="entry name" value="RADICAL_SAM"/>
    <property type="match status" value="1"/>
</dbReference>
<sequence length="426" mass="46688">MASPAPLQRLQAPLRRSLARAAVLSSRTYATIPSPSDPGLTQSSPSPAASTTPAKKAPRPSYFKDTTVASFSEFVGSQSAPLSLSEAYEIKTAEVGPAGRKRTITRLPEWLKTPIPSSGANPNFGKIKADLRGLNLHTVCEEARCPNIGECWGGNDKSAATATIMLMGDTCTRGCRFCSVKTNRKPPPLDPHEPENTAEALARWGLGYVVLTSVDRDDLADGGARHFAETIRRIKQKKPTLLVEALTGDFMGDLDMVKIVAESGLDVYAHNVETVEGLTPYVRDRRATFRQSLKVLEHVKAVRGKEGIITKTSIMLGLGEQEQEIWDTLRELRKIDVDVVTFGQYMRPTKRHLKVEKYVTPDEFDLWKQRALDMGFLYCASGPLVRSSYKAGEAFIENVLRKRAGERAAASASLDQVVAAEETKAL</sequence>
<accession>B2AT43</accession>
<accession>A0A090CEZ8</accession>
<protein>
    <recommendedName>
        <fullName evidence="1">Lipoyl synthase, mitochondrial</fullName>
        <ecNumber evidence="1">2.8.1.8</ecNumber>
    </recommendedName>
    <alternativeName>
        <fullName evidence="1">Lipoate synthase</fullName>
        <shortName evidence="1">LS</shortName>
        <shortName evidence="1">Lip-syn</shortName>
    </alternativeName>
    <alternativeName>
        <fullName evidence="1">Lipoic acid synthase</fullName>
    </alternativeName>
</protein>
<comment type="function">
    <text evidence="1">Catalyzes the radical-mediated insertion of two sulfur atoms into the C-6 and C-8 positions of the octanoyl moiety bound to the lipoyl domains of lipoate-dependent enzymes, thereby converting the octanoylated domains into lipoylated derivatives.</text>
</comment>
<comment type="catalytic activity">
    <reaction evidence="1">
        <text>[[Fe-S] cluster scaffold protein carrying a second [4Fe-4S](2+) cluster] + N(6)-octanoyl-L-lysyl-[protein] + 2 oxidized [2Fe-2S]-[ferredoxin] + 2 S-adenosyl-L-methionine + 4 H(+) = [[Fe-S] cluster scaffold protein] + N(6)-[(R)-dihydrolipoyl]-L-lysyl-[protein] + 4 Fe(3+) + 2 hydrogen sulfide + 2 5'-deoxyadenosine + 2 L-methionine + 2 reduced [2Fe-2S]-[ferredoxin]</text>
        <dbReference type="Rhea" id="RHEA:16585"/>
        <dbReference type="Rhea" id="RHEA-COMP:9928"/>
        <dbReference type="Rhea" id="RHEA-COMP:10000"/>
        <dbReference type="Rhea" id="RHEA-COMP:10001"/>
        <dbReference type="Rhea" id="RHEA-COMP:10475"/>
        <dbReference type="Rhea" id="RHEA-COMP:14568"/>
        <dbReference type="Rhea" id="RHEA-COMP:14569"/>
        <dbReference type="ChEBI" id="CHEBI:15378"/>
        <dbReference type="ChEBI" id="CHEBI:17319"/>
        <dbReference type="ChEBI" id="CHEBI:29034"/>
        <dbReference type="ChEBI" id="CHEBI:29919"/>
        <dbReference type="ChEBI" id="CHEBI:33722"/>
        <dbReference type="ChEBI" id="CHEBI:33737"/>
        <dbReference type="ChEBI" id="CHEBI:33738"/>
        <dbReference type="ChEBI" id="CHEBI:57844"/>
        <dbReference type="ChEBI" id="CHEBI:59789"/>
        <dbReference type="ChEBI" id="CHEBI:78809"/>
        <dbReference type="ChEBI" id="CHEBI:83100"/>
        <dbReference type="EC" id="2.8.1.8"/>
    </reaction>
</comment>
<comment type="cofactor">
    <cofactor evidence="1">
        <name>[4Fe-4S] cluster</name>
        <dbReference type="ChEBI" id="CHEBI:49883"/>
    </cofactor>
    <text evidence="1">Binds 2 [4Fe-4S] clusters per subunit. One cluster is coordinated with 3 cysteines and an exchangeable S-adenosyl-L-methionine.</text>
</comment>
<comment type="pathway">
    <text evidence="1">Protein modification; protein lipoylation via endogenous pathway; protein N(6)-(lipoyl)lysine from octanoyl-[acyl-carrier-protein]: step 2/2.</text>
</comment>
<comment type="subcellular location">
    <subcellularLocation>
        <location evidence="1">Mitochondrion</location>
    </subcellularLocation>
</comment>
<comment type="similarity">
    <text evidence="1">Belongs to the radical SAM superfamily. Lipoyl synthase family.</text>
</comment>
<organism>
    <name type="scientific">Podospora anserina (strain S / ATCC MYA-4624 / DSM 980 / FGSC 10383)</name>
    <name type="common">Pleurage anserina</name>
    <dbReference type="NCBI Taxonomy" id="515849"/>
    <lineage>
        <taxon>Eukaryota</taxon>
        <taxon>Fungi</taxon>
        <taxon>Dikarya</taxon>
        <taxon>Ascomycota</taxon>
        <taxon>Pezizomycotina</taxon>
        <taxon>Sordariomycetes</taxon>
        <taxon>Sordariomycetidae</taxon>
        <taxon>Sordariales</taxon>
        <taxon>Podosporaceae</taxon>
        <taxon>Podospora</taxon>
        <taxon>Podospora anserina</taxon>
    </lineage>
</organism>
<gene>
    <name type="ordered locus">Pa_1_14620</name>
    <name type="ORF">PODANS_1_14620</name>
</gene>
<keyword id="KW-0004">4Fe-4S</keyword>
<keyword id="KW-0408">Iron</keyword>
<keyword id="KW-0411">Iron-sulfur</keyword>
<keyword id="KW-0479">Metal-binding</keyword>
<keyword id="KW-0496">Mitochondrion</keyword>
<keyword id="KW-1185">Reference proteome</keyword>
<keyword id="KW-0949">S-adenosyl-L-methionine</keyword>
<keyword id="KW-0808">Transferase</keyword>
<keyword id="KW-0809">Transit peptide</keyword>
<name>LIPA_PODAN</name>
<proteinExistence type="inferred from homology"/>
<evidence type="ECO:0000255" key="1">
    <source>
        <dbReference type="HAMAP-Rule" id="MF_03123"/>
    </source>
</evidence>
<evidence type="ECO:0000255" key="2">
    <source>
        <dbReference type="PROSITE-ProRule" id="PRU01266"/>
    </source>
</evidence>
<evidence type="ECO:0000256" key="3">
    <source>
        <dbReference type="SAM" id="MobiDB-lite"/>
    </source>
</evidence>
<feature type="transit peptide" description="Mitochondrion" evidence="1">
    <location>
        <begin position="1"/>
        <end position="29"/>
    </location>
</feature>
<feature type="chain" id="PRO_0000398284" description="Lipoyl synthase, mitochondrial">
    <location>
        <begin position="30"/>
        <end position="426"/>
    </location>
</feature>
<feature type="domain" description="Radical SAM core" evidence="2">
    <location>
        <begin position="154"/>
        <end position="377"/>
    </location>
</feature>
<feature type="region of interest" description="Disordered" evidence="3">
    <location>
        <begin position="27"/>
        <end position="61"/>
    </location>
</feature>
<feature type="compositionally biased region" description="Polar residues" evidence="3">
    <location>
        <begin position="27"/>
        <end position="42"/>
    </location>
</feature>
<feature type="compositionally biased region" description="Low complexity" evidence="3">
    <location>
        <begin position="43"/>
        <end position="55"/>
    </location>
</feature>
<feature type="binding site" evidence="1">
    <location>
        <position position="140"/>
    </location>
    <ligand>
        <name>[4Fe-4S] cluster</name>
        <dbReference type="ChEBI" id="CHEBI:49883"/>
        <label>1</label>
    </ligand>
</feature>
<feature type="binding site" evidence="1">
    <location>
        <position position="145"/>
    </location>
    <ligand>
        <name>[4Fe-4S] cluster</name>
        <dbReference type="ChEBI" id="CHEBI:49883"/>
        <label>1</label>
    </ligand>
</feature>
<feature type="binding site" evidence="1">
    <location>
        <position position="151"/>
    </location>
    <ligand>
        <name>[4Fe-4S] cluster</name>
        <dbReference type="ChEBI" id="CHEBI:49883"/>
        <label>1</label>
    </ligand>
</feature>
<feature type="binding site" evidence="1">
    <location>
        <position position="171"/>
    </location>
    <ligand>
        <name>[4Fe-4S] cluster</name>
        <dbReference type="ChEBI" id="CHEBI:49883"/>
        <label>2</label>
        <note>4Fe-4S-S-AdoMet</note>
    </ligand>
</feature>
<feature type="binding site" evidence="1">
    <location>
        <position position="175"/>
    </location>
    <ligand>
        <name>[4Fe-4S] cluster</name>
        <dbReference type="ChEBI" id="CHEBI:49883"/>
        <label>2</label>
        <note>4Fe-4S-S-AdoMet</note>
    </ligand>
</feature>
<feature type="binding site" evidence="1">
    <location>
        <position position="178"/>
    </location>
    <ligand>
        <name>[4Fe-4S] cluster</name>
        <dbReference type="ChEBI" id="CHEBI:49883"/>
        <label>2</label>
        <note>4Fe-4S-S-AdoMet</note>
    </ligand>
</feature>
<feature type="binding site" evidence="1">
    <location>
        <position position="388"/>
    </location>
    <ligand>
        <name>[4Fe-4S] cluster</name>
        <dbReference type="ChEBI" id="CHEBI:49883"/>
        <label>1</label>
    </ligand>
</feature>